<gene>
    <name evidence="8" type="ORF">TGRH88_065850</name>
</gene>
<organism evidence="9">
    <name type="scientific">Toxoplasma gondii</name>
    <dbReference type="NCBI Taxonomy" id="5811"/>
    <lineage>
        <taxon>Eukaryota</taxon>
        <taxon>Sar</taxon>
        <taxon>Alveolata</taxon>
        <taxon>Apicomplexa</taxon>
        <taxon>Conoidasida</taxon>
        <taxon>Coccidia</taxon>
        <taxon>Eucoccidiorida</taxon>
        <taxon>Eimeriorina</taxon>
        <taxon>Sarcocystidae</taxon>
        <taxon>Toxoplasma</taxon>
    </lineage>
</organism>
<name>TSP1_TOXGO</name>
<keyword id="KW-0472">Membrane</keyword>
<keyword id="KW-1185">Reference proteome</keyword>
<keyword id="KW-0812">Transmembrane</keyword>
<keyword id="KW-1133">Transmembrane helix</keyword>
<sequence>MMPATRRSASVLVSARGSAARFPASSVSFLHKGAADVCRRFSASLSPFSCSAFVSPSCPMASSSPFSPPLFSSLVSSPSSPSAGFPRSASSSASSAPPCSSAGVSKVSCLKLSCGERQQEGEPSLPRSAEERKATNRRELECLRALQSAVAEREAEADGGWTTWRGVSQRTWKQKRPALLSSRVTAAMSLEEEDSTSGPRGYEEERERRSGVCGERGQNGGEKLGRVQGVSTGDSESRTRCRRGLHFSPQTNRSFVVLLSCLLFFLVGEVQEVCLPSLQRMESSTDFFFFKIASAEAHTANPGDSSKSRRRSPRSSRFTSKASSDSSSSSRSSADSSSSSRSSADSSSSSRSSADSSSSHPSSSSSSPLSSSPDSSPEEVNGLRGRARVWTRRGGLSSRLREFLSDASALRSQESAADAVEEARARVRLLSRFARSRRQTLEALGGKSRRSEWRRKRTGMMASEARESHRGRDLNTLADREKKALKSALLAAQLSRRRMQSIQSERSLYSLVRPLLDESDAAGVYTANECVAVRYADYPKEFPGYDISTESCRCPDGWLPCAESDAVARMSAWEPVIWEENADEGCTSERGEVMLEHMNFYSCPQRTFVEYTGPRDATIRDKQCKRVAFVLCRAATSSCITGPWSEWTSCSVPCGEGYQYRWRIPVTGASSSTDKGAVTQRSSREACAPYHMEERRKCNLGACPEKITKTTCFWTTVQVDRAEGAFDEDQGSCKCGTGDDAIDREEGAMVPCTPEEAVASMDNWKSHFRQHCYTSLGLRRRSNLALRFHSYGHVVRLGLRDLWHLDCTGGWSKFNIFEAKMFCGVGAKILCRSRTDSAQVPFSMEQHNAESDAVTRISMLLKRQRRVEEASPQAFAEESLLLSEGGVSHLWISLCAGAVAAVVFLVCLTKRAAVGTFLRSRVSTATAGGETVSAKGSTRGSRNAGRRVFSAQAVREAVEERVHAFVAFARRQTTAVILATEKWMETAAEREVTQEMQGVSTASLRLLERDCKEREERDSARKSCPQEAKGLLEGEEDVPALLVFPALKTATDRVVRVARSTLSLETRSFSGAQRSAQRLWGKVRSIFLARGKEKRDEDLFYGEEGERGRIQRGGPAAFVSSLACQKVERRRARRGRREGDSGEGGDCGEARKANSGVAGRLDSLTEMERDDSFVLSAVEEKLLFPRGKRNTQEKLARINKAARTAAVSAVTPESFGSM</sequence>
<evidence type="ECO:0000255" key="1"/>
<evidence type="ECO:0000255" key="2">
    <source>
        <dbReference type="PROSITE-ProRule" id="PRU00210"/>
    </source>
</evidence>
<evidence type="ECO:0000256" key="3">
    <source>
        <dbReference type="SAM" id="MobiDB-lite"/>
    </source>
</evidence>
<evidence type="ECO:0000269" key="4">
    <source>
    </source>
</evidence>
<evidence type="ECO:0000269" key="5">
    <source>
    </source>
</evidence>
<evidence type="ECO:0000303" key="6">
    <source>
    </source>
</evidence>
<evidence type="ECO:0000305" key="7"/>
<evidence type="ECO:0000312" key="8">
    <source>
        <dbReference type="EMBL" id="KAF4638976.1"/>
    </source>
</evidence>
<evidence type="ECO:0000312" key="9">
    <source>
        <dbReference type="Proteomes" id="UP000557509"/>
    </source>
</evidence>
<accession>A0A7J6JXE5</accession>
<reference evidence="9" key="1">
    <citation type="submission" date="2020-03" db="EMBL/GenBank/DDBJ databases">
        <title>Genome sequence of Toxoplasma gondii RH-88 strain.</title>
        <authorList>
            <person name="Lorenzi H.A."/>
            <person name="Venepally P."/>
            <person name="Rozenberg A."/>
            <person name="Sibley D."/>
        </authorList>
    </citation>
    <scope>NUCLEOTIDE SEQUENCE [LARGE SCALE GENOMIC DNA]</scope>
    <source>
        <strain evidence="9">RH-88</strain>
    </source>
</reference>
<reference evidence="7" key="2">
    <citation type="journal article" date="2022" name="EMBO J.">
        <title>An apical membrane complex for triggering rhoptry exocytosis and invasion in Toxoplasma.</title>
        <authorList>
            <person name="Sparvoli D."/>
            <person name="Delabre J."/>
            <person name="Penarete-Vargas D.M."/>
            <person name="Kumar Mageswaran S."/>
            <person name="Tsypin L.M."/>
            <person name="Heckendorn J."/>
            <person name="Theveny L."/>
            <person name="Maynadier M."/>
            <person name="Mendonca Cova M."/>
            <person name="Berry-Sterkers L."/>
            <person name="Guerin A."/>
            <person name="Dubremetz J.F."/>
            <person name="Urbach S."/>
            <person name="Striepen B."/>
            <person name="Turkewitz A.P."/>
            <person name="Chang Y.W."/>
            <person name="Lebrun M."/>
        </authorList>
    </citation>
    <scope>FUNCTION</scope>
    <scope>INTERACTION WITH CYSTEINE REPEAT MODULAR PROTEIN A; CYSTEINE REPEAT MODULAR PROTEIN B AND MICRONEMAL PROTEIN 15</scope>
    <scope>DISRUPTION PHENOTYPE</scope>
</reference>
<reference evidence="7" key="3">
    <citation type="journal article" date="2023" name="PLoS Biol.">
        <title>A central CRMP complex essential for invasion in Toxoplasma gondii.</title>
        <authorList>
            <person name="Singer M."/>
            <person name="Simon K."/>
            <person name="Forne I."/>
            <person name="Meissner M."/>
        </authorList>
    </citation>
    <scope>FUNCTION</scope>
    <scope>INTERACTION WITH CYSTEINE REPEAT MODULAR PROTEIN A; CYSTEINE REPEAT MODULAR PROTEIN B AND MICRONEMAL PROTEIN 15</scope>
</reference>
<comment type="function">
    <text evidence="4 5">Required for rhoptry secretion (PubMed:36245278). Plays a role in host cell invasion (PubMed:36602948).</text>
</comment>
<comment type="subunit">
    <text evidence="4 5">Component of a complex, at least composed of cysteine repeat modular protein A (CRMPa), cysteine repeat modular protein B (CRMPb), micronemal protein 15 (MIC15) and thrombospondin type 1 domain-containing protein (TSP1).</text>
</comment>
<comment type="subcellular location">
    <subcellularLocation>
        <location evidence="1">Membrane</location>
        <topology evidence="1">Single-pass membrane protein</topology>
    </subcellularLocation>
</comment>
<comment type="disruption phenotype">
    <text evidence="4">Conditional knockout results in reduction in the area of lytic plaques due to inability of the parasites to invade the host cells (PubMed:36245278). Loss of rhoptries discharge (PubMed:36245278). No significant effects on parasite replication, stimulated egress and attachment to host cells (PubMed:36245278). No significant effects on morphology and localization of rhoptry and microneme structures (PubMed:36245278). No significant effects on microneme secretion (PubMed:36245278).</text>
</comment>
<feature type="chain" id="PRO_0000461862" description="Thrombospondin type 1 domain-containing protein" evidence="1">
    <location>
        <begin position="1"/>
        <end position="1218"/>
    </location>
</feature>
<feature type="transmembrane region" description="Helical" evidence="1">
    <location>
        <begin position="886"/>
        <end position="906"/>
    </location>
</feature>
<feature type="domain" description="TSP type-1" evidence="2">
    <location>
        <begin position="638"/>
        <end position="704"/>
    </location>
</feature>
<feature type="region of interest" description="Disordered" evidence="3">
    <location>
        <begin position="82"/>
        <end position="101"/>
    </location>
</feature>
<feature type="region of interest" description="Disordered" evidence="3">
    <location>
        <begin position="189"/>
        <end position="240"/>
    </location>
</feature>
<feature type="region of interest" description="Disordered" evidence="3">
    <location>
        <begin position="298"/>
        <end position="383"/>
    </location>
</feature>
<feature type="region of interest" description="Disordered" evidence="3">
    <location>
        <begin position="445"/>
        <end position="471"/>
    </location>
</feature>
<feature type="region of interest" description="Disordered" evidence="3">
    <location>
        <begin position="1129"/>
        <end position="1153"/>
    </location>
</feature>
<feature type="compositionally biased region" description="Basic and acidic residues" evidence="3">
    <location>
        <begin position="201"/>
        <end position="210"/>
    </location>
</feature>
<feature type="compositionally biased region" description="Low complexity" evidence="3">
    <location>
        <begin position="315"/>
        <end position="375"/>
    </location>
</feature>
<protein>
    <recommendedName>
        <fullName evidence="6">Thrombospondin type 1 domain-containing protein</fullName>
        <shortName evidence="6">TSP1</shortName>
    </recommendedName>
</protein>
<proteinExistence type="evidence at protein level"/>
<dbReference type="EMBL" id="JAAUHK010000197">
    <property type="protein sequence ID" value="KAF4638976.1"/>
    <property type="molecule type" value="Genomic_DNA"/>
</dbReference>
<dbReference type="VEuPathDB" id="ToxoDB:TGME49_277910"/>
<dbReference type="Proteomes" id="UP000557509">
    <property type="component" value="Unassembled WGS sequence"/>
</dbReference>
<dbReference type="GO" id="GO:0016020">
    <property type="term" value="C:membrane"/>
    <property type="evidence" value="ECO:0007669"/>
    <property type="project" value="UniProtKB-SubCell"/>
</dbReference>
<dbReference type="Gene3D" id="2.20.100.10">
    <property type="entry name" value="Thrombospondin type-1 (TSP1) repeat"/>
    <property type="match status" value="1"/>
</dbReference>
<dbReference type="InterPro" id="IPR000884">
    <property type="entry name" value="TSP1_rpt"/>
</dbReference>
<dbReference type="InterPro" id="IPR036383">
    <property type="entry name" value="TSP1_rpt_sf"/>
</dbReference>
<dbReference type="Pfam" id="PF00090">
    <property type="entry name" value="TSP_1"/>
    <property type="match status" value="1"/>
</dbReference>
<dbReference type="SMART" id="SM00209">
    <property type="entry name" value="TSP1"/>
    <property type="match status" value="1"/>
</dbReference>
<dbReference type="SUPFAM" id="SSF82895">
    <property type="entry name" value="TSP-1 type 1 repeat"/>
    <property type="match status" value="1"/>
</dbReference>
<dbReference type="PROSITE" id="PS50092">
    <property type="entry name" value="TSP1"/>
    <property type="match status" value="1"/>
</dbReference>